<proteinExistence type="evidence at protein level"/>
<organism>
    <name type="scientific">Arabidopsis thaliana</name>
    <name type="common">Mouse-ear cress</name>
    <dbReference type="NCBI Taxonomy" id="3702"/>
    <lineage>
        <taxon>Eukaryota</taxon>
        <taxon>Viridiplantae</taxon>
        <taxon>Streptophyta</taxon>
        <taxon>Embryophyta</taxon>
        <taxon>Tracheophyta</taxon>
        <taxon>Spermatophyta</taxon>
        <taxon>Magnoliopsida</taxon>
        <taxon>eudicotyledons</taxon>
        <taxon>Gunneridae</taxon>
        <taxon>Pentapetalae</taxon>
        <taxon>rosids</taxon>
        <taxon>malvids</taxon>
        <taxon>Brassicales</taxon>
        <taxon>Brassicaceae</taxon>
        <taxon>Camelineae</taxon>
        <taxon>Arabidopsis</taxon>
    </lineage>
</organism>
<keyword id="KW-0007">Acetylation</keyword>
<keyword id="KW-0025">Alternative splicing</keyword>
<keyword id="KW-0963">Cytoplasm</keyword>
<keyword id="KW-0206">Cytoskeleton</keyword>
<keyword id="KW-0342">GTP-binding</keyword>
<keyword id="KW-0378">Hydrolase</keyword>
<keyword id="KW-0460">Magnesium</keyword>
<keyword id="KW-0479">Metal-binding</keyword>
<keyword id="KW-0493">Microtubule</keyword>
<keyword id="KW-0547">Nucleotide-binding</keyword>
<keyword id="KW-0597">Phosphoprotein</keyword>
<keyword id="KW-1185">Reference proteome</keyword>
<reference key="1">
    <citation type="journal article" date="1992" name="Plant Cell">
        <title>The small genome of Arabidopsis contains at least six expressed alpha-tubulin genes.</title>
        <authorList>
            <person name="Kopczak S.D."/>
            <person name="Haas N.A."/>
            <person name="Hussey P.J."/>
            <person name="Silflow C.D."/>
            <person name="Snustad D.P."/>
        </authorList>
    </citation>
    <scope>NUCLEOTIDE SEQUENCE [GENOMIC DNA]</scope>
    <source>
        <strain>cv. Columbia</strain>
    </source>
</reference>
<reference key="2">
    <citation type="journal article" date="1998" name="Nature">
        <title>Analysis of 1.9 Mb of contiguous sequence from chromosome 4 of Arabidopsis thaliana.</title>
        <authorList>
            <person name="Bevan M."/>
            <person name="Bancroft I."/>
            <person name="Bent E."/>
            <person name="Love K."/>
            <person name="Goodman H.M."/>
            <person name="Dean C."/>
            <person name="Bergkamp R."/>
            <person name="Dirkse W."/>
            <person name="van Staveren M."/>
            <person name="Stiekema W."/>
            <person name="Drost L."/>
            <person name="Ridley P."/>
            <person name="Hudson S.-A."/>
            <person name="Patel K."/>
            <person name="Murphy G."/>
            <person name="Piffanelli P."/>
            <person name="Wedler H."/>
            <person name="Wedler E."/>
            <person name="Wambutt R."/>
            <person name="Weitzenegger T."/>
            <person name="Pohl T."/>
            <person name="Terryn N."/>
            <person name="Gielen J."/>
            <person name="Villarroel R."/>
            <person name="De Clercq R."/>
            <person name="van Montagu M."/>
            <person name="Lecharny A."/>
            <person name="Aubourg S."/>
            <person name="Gy I."/>
            <person name="Kreis M."/>
            <person name="Lao N."/>
            <person name="Kavanagh T."/>
            <person name="Hempel S."/>
            <person name="Kotter P."/>
            <person name="Entian K.-D."/>
            <person name="Rieger M."/>
            <person name="Schaefer M."/>
            <person name="Funk B."/>
            <person name="Mueller-Auer S."/>
            <person name="Silvey M."/>
            <person name="James R."/>
            <person name="Monfort A."/>
            <person name="Pons A."/>
            <person name="Puigdomenech P."/>
            <person name="Douka A."/>
            <person name="Voukelatou E."/>
            <person name="Milioni D."/>
            <person name="Hatzopoulos P."/>
            <person name="Piravandi E."/>
            <person name="Obermaier B."/>
            <person name="Hilbert H."/>
            <person name="Duesterhoeft A."/>
            <person name="Moores T."/>
            <person name="Jones J.D.G."/>
            <person name="Eneva T."/>
            <person name="Palme K."/>
            <person name="Benes V."/>
            <person name="Rechmann S."/>
            <person name="Ansorge W."/>
            <person name="Cooke R."/>
            <person name="Berger C."/>
            <person name="Delseny M."/>
            <person name="Voet M."/>
            <person name="Volckaert G."/>
            <person name="Mewes H.-W."/>
            <person name="Klosterman S."/>
            <person name="Schueller C."/>
            <person name="Chalwatzis N."/>
        </authorList>
    </citation>
    <scope>NUCLEOTIDE SEQUENCE [LARGE SCALE GENOMIC DNA]</scope>
    <source>
        <strain>cv. Columbia</strain>
    </source>
</reference>
<reference key="3">
    <citation type="journal article" date="1999" name="Nature">
        <title>Sequence and analysis of chromosome 4 of the plant Arabidopsis thaliana.</title>
        <authorList>
            <person name="Mayer K.F.X."/>
            <person name="Schueller C."/>
            <person name="Wambutt R."/>
            <person name="Murphy G."/>
            <person name="Volckaert G."/>
            <person name="Pohl T."/>
            <person name="Duesterhoeft A."/>
            <person name="Stiekema W."/>
            <person name="Entian K.-D."/>
            <person name="Terryn N."/>
            <person name="Harris B."/>
            <person name="Ansorge W."/>
            <person name="Brandt P."/>
            <person name="Grivell L.A."/>
            <person name="Rieger M."/>
            <person name="Weichselgartner M."/>
            <person name="de Simone V."/>
            <person name="Obermaier B."/>
            <person name="Mache R."/>
            <person name="Mueller M."/>
            <person name="Kreis M."/>
            <person name="Delseny M."/>
            <person name="Puigdomenech P."/>
            <person name="Watson M."/>
            <person name="Schmidtheini T."/>
            <person name="Reichert B."/>
            <person name="Portetelle D."/>
            <person name="Perez-Alonso M."/>
            <person name="Boutry M."/>
            <person name="Bancroft I."/>
            <person name="Vos P."/>
            <person name="Hoheisel J."/>
            <person name="Zimmermann W."/>
            <person name="Wedler H."/>
            <person name="Ridley P."/>
            <person name="Langham S.-A."/>
            <person name="McCullagh B."/>
            <person name="Bilham L."/>
            <person name="Robben J."/>
            <person name="van der Schueren J."/>
            <person name="Grymonprez B."/>
            <person name="Chuang Y.-J."/>
            <person name="Vandenbussche F."/>
            <person name="Braeken M."/>
            <person name="Weltjens I."/>
            <person name="Voet M."/>
            <person name="Bastiaens I."/>
            <person name="Aert R."/>
            <person name="Defoor E."/>
            <person name="Weitzenegger T."/>
            <person name="Bothe G."/>
            <person name="Ramsperger U."/>
            <person name="Hilbert H."/>
            <person name="Braun M."/>
            <person name="Holzer E."/>
            <person name="Brandt A."/>
            <person name="Peters S."/>
            <person name="van Staveren M."/>
            <person name="Dirkse W."/>
            <person name="Mooijman P."/>
            <person name="Klein Lankhorst R."/>
            <person name="Rose M."/>
            <person name="Hauf J."/>
            <person name="Koetter P."/>
            <person name="Berneiser S."/>
            <person name="Hempel S."/>
            <person name="Feldpausch M."/>
            <person name="Lamberth S."/>
            <person name="Van den Daele H."/>
            <person name="De Keyser A."/>
            <person name="Buysshaert C."/>
            <person name="Gielen J."/>
            <person name="Villarroel R."/>
            <person name="De Clercq R."/>
            <person name="van Montagu M."/>
            <person name="Rogers J."/>
            <person name="Cronin A."/>
            <person name="Quail M.A."/>
            <person name="Bray-Allen S."/>
            <person name="Clark L."/>
            <person name="Doggett J."/>
            <person name="Hall S."/>
            <person name="Kay M."/>
            <person name="Lennard N."/>
            <person name="McLay K."/>
            <person name="Mayes R."/>
            <person name="Pettett A."/>
            <person name="Rajandream M.A."/>
            <person name="Lyne M."/>
            <person name="Benes V."/>
            <person name="Rechmann S."/>
            <person name="Borkova D."/>
            <person name="Bloecker H."/>
            <person name="Scharfe M."/>
            <person name="Grimm M."/>
            <person name="Loehnert T.-H."/>
            <person name="Dose S."/>
            <person name="de Haan M."/>
            <person name="Maarse A.C."/>
            <person name="Schaefer M."/>
            <person name="Mueller-Auer S."/>
            <person name="Gabel C."/>
            <person name="Fuchs M."/>
            <person name="Fartmann B."/>
            <person name="Granderath K."/>
            <person name="Dauner D."/>
            <person name="Herzl A."/>
            <person name="Neumann S."/>
            <person name="Argiriou A."/>
            <person name="Vitale D."/>
            <person name="Liguori R."/>
            <person name="Piravandi E."/>
            <person name="Massenet O."/>
            <person name="Quigley F."/>
            <person name="Clabauld G."/>
            <person name="Muendlein A."/>
            <person name="Felber R."/>
            <person name="Schnabl S."/>
            <person name="Hiller R."/>
            <person name="Schmidt W."/>
            <person name="Lecharny A."/>
            <person name="Aubourg S."/>
            <person name="Chefdor F."/>
            <person name="Cooke R."/>
            <person name="Berger C."/>
            <person name="Monfort A."/>
            <person name="Casacuberta E."/>
            <person name="Gibbons T."/>
            <person name="Weber N."/>
            <person name="Vandenbol M."/>
            <person name="Bargues M."/>
            <person name="Terol J."/>
            <person name="Torres A."/>
            <person name="Perez-Perez A."/>
            <person name="Purnelle B."/>
            <person name="Bent E."/>
            <person name="Johnson S."/>
            <person name="Tacon D."/>
            <person name="Jesse T."/>
            <person name="Heijnen L."/>
            <person name="Schwarz S."/>
            <person name="Scholler P."/>
            <person name="Heber S."/>
            <person name="Francs P."/>
            <person name="Bielke C."/>
            <person name="Frishman D."/>
            <person name="Haase D."/>
            <person name="Lemcke K."/>
            <person name="Mewes H.-W."/>
            <person name="Stocker S."/>
            <person name="Zaccaria P."/>
            <person name="Bevan M."/>
            <person name="Wilson R.K."/>
            <person name="de la Bastide M."/>
            <person name="Habermann K."/>
            <person name="Parnell L."/>
            <person name="Dedhia N."/>
            <person name="Gnoj L."/>
            <person name="Schutz K."/>
            <person name="Huang E."/>
            <person name="Spiegel L."/>
            <person name="Sekhon M."/>
            <person name="Murray J."/>
            <person name="Sheet P."/>
            <person name="Cordes M."/>
            <person name="Abu-Threideh J."/>
            <person name="Stoneking T."/>
            <person name="Kalicki J."/>
            <person name="Graves T."/>
            <person name="Harmon G."/>
            <person name="Edwards J."/>
            <person name="Latreille P."/>
            <person name="Courtney L."/>
            <person name="Cloud J."/>
            <person name="Abbott A."/>
            <person name="Scott K."/>
            <person name="Johnson D."/>
            <person name="Minx P."/>
            <person name="Bentley D."/>
            <person name="Fulton B."/>
            <person name="Miller N."/>
            <person name="Greco T."/>
            <person name="Kemp K."/>
            <person name="Kramer J."/>
            <person name="Fulton L."/>
            <person name="Mardis E."/>
            <person name="Dante M."/>
            <person name="Pepin K."/>
            <person name="Hillier L.W."/>
            <person name="Nelson J."/>
            <person name="Spieth J."/>
            <person name="Ryan E."/>
            <person name="Andrews S."/>
            <person name="Geisel C."/>
            <person name="Layman D."/>
            <person name="Du H."/>
            <person name="Ali J."/>
            <person name="Berghoff A."/>
            <person name="Jones K."/>
            <person name="Drone K."/>
            <person name="Cotton M."/>
            <person name="Joshu C."/>
            <person name="Antonoiu B."/>
            <person name="Zidanic M."/>
            <person name="Strong C."/>
            <person name="Sun H."/>
            <person name="Lamar B."/>
            <person name="Yordan C."/>
            <person name="Ma P."/>
            <person name="Zhong J."/>
            <person name="Preston R."/>
            <person name="Vil D."/>
            <person name="Shekher M."/>
            <person name="Matero A."/>
            <person name="Shah R."/>
            <person name="Swaby I.K."/>
            <person name="O'Shaughnessy A."/>
            <person name="Rodriguez M."/>
            <person name="Hoffman J."/>
            <person name="Till S."/>
            <person name="Granat S."/>
            <person name="Shohdy N."/>
            <person name="Hasegawa A."/>
            <person name="Hameed A."/>
            <person name="Lodhi M."/>
            <person name="Johnson A."/>
            <person name="Chen E."/>
            <person name="Marra M.A."/>
            <person name="Martienssen R."/>
            <person name="McCombie W.R."/>
        </authorList>
    </citation>
    <scope>NUCLEOTIDE SEQUENCE [LARGE SCALE GENOMIC DNA]</scope>
    <source>
        <strain>cv. Columbia</strain>
    </source>
</reference>
<reference key="4">
    <citation type="journal article" date="2017" name="Plant J.">
        <title>Araport11: a complete reannotation of the Arabidopsis thaliana reference genome.</title>
        <authorList>
            <person name="Cheng C.Y."/>
            <person name="Krishnakumar V."/>
            <person name="Chan A.P."/>
            <person name="Thibaud-Nissen F."/>
            <person name="Schobel S."/>
            <person name="Town C.D."/>
        </authorList>
    </citation>
    <scope>GENOME REANNOTATION</scope>
    <source>
        <strain>cv. Columbia</strain>
    </source>
</reference>
<reference key="5">
    <citation type="journal article" date="2003" name="Science">
        <title>Empirical analysis of transcriptional activity in the Arabidopsis genome.</title>
        <authorList>
            <person name="Yamada K."/>
            <person name="Lim J."/>
            <person name="Dale J.M."/>
            <person name="Chen H."/>
            <person name="Shinn P."/>
            <person name="Palm C.J."/>
            <person name="Southwick A.M."/>
            <person name="Wu H.C."/>
            <person name="Kim C.J."/>
            <person name="Nguyen M."/>
            <person name="Pham P.K."/>
            <person name="Cheuk R.F."/>
            <person name="Karlin-Newmann G."/>
            <person name="Liu S.X."/>
            <person name="Lam B."/>
            <person name="Sakano H."/>
            <person name="Wu T."/>
            <person name="Yu G."/>
            <person name="Miranda M."/>
            <person name="Quach H.L."/>
            <person name="Tripp M."/>
            <person name="Chang C.H."/>
            <person name="Lee J.M."/>
            <person name="Toriumi M.J."/>
            <person name="Chan M.M."/>
            <person name="Tang C.C."/>
            <person name="Onodera C.S."/>
            <person name="Deng J.M."/>
            <person name="Akiyama K."/>
            <person name="Ansari Y."/>
            <person name="Arakawa T."/>
            <person name="Banh J."/>
            <person name="Banno F."/>
            <person name="Bowser L."/>
            <person name="Brooks S.Y."/>
            <person name="Carninci P."/>
            <person name="Chao Q."/>
            <person name="Choy N."/>
            <person name="Enju A."/>
            <person name="Goldsmith A.D."/>
            <person name="Gurjal M."/>
            <person name="Hansen N.F."/>
            <person name="Hayashizaki Y."/>
            <person name="Johnson-Hopson C."/>
            <person name="Hsuan V.W."/>
            <person name="Iida K."/>
            <person name="Karnes M."/>
            <person name="Khan S."/>
            <person name="Koesema E."/>
            <person name="Ishida J."/>
            <person name="Jiang P.X."/>
            <person name="Jones T."/>
            <person name="Kawai J."/>
            <person name="Kamiya A."/>
            <person name="Meyers C."/>
            <person name="Nakajima M."/>
            <person name="Narusaka M."/>
            <person name="Seki M."/>
            <person name="Sakurai T."/>
            <person name="Satou M."/>
            <person name="Tamse R."/>
            <person name="Vaysberg M."/>
            <person name="Wallender E.K."/>
            <person name="Wong C."/>
            <person name="Yamamura Y."/>
            <person name="Yuan S."/>
            <person name="Shinozaki K."/>
            <person name="Davis R.W."/>
            <person name="Theologis A."/>
            <person name="Ecker J.R."/>
        </authorList>
    </citation>
    <scope>NUCLEOTIDE SEQUENCE [LARGE SCALE MRNA]</scope>
    <source>
        <strain>cv. Columbia</strain>
    </source>
</reference>
<reference key="6">
    <citation type="journal article" date="2006" name="Plant Cell Physiol.">
        <title>Arabidopsis tubulin folding cofactor B interacts with alpha-tubulin in vivo.</title>
        <authorList>
            <person name="Dhonukshe P."/>
            <person name="Bargmann B.O."/>
            <person name="Gadella T.W. Jr."/>
        </authorList>
    </citation>
    <scope>INTERACTION WITH TFCB</scope>
</reference>
<sequence>MRECISIHIGQAGIQVGNACWELYCLEHGIQPDGQMPGDKTVGGGDDAFNTFFSETGAGKHVPRAVFVDLEPTVIDEVRTGTYRQLFHPEQLISGKEDAANNFARGHYTIGKEIVDLCLDRIRKLADNCTGLQGFLVFNAVGGGTGSGLGSLLLERLSVDYGKKSKLGFTVYPSPQVSTSVVEPYNSVLSTHSLLEHTDVSILLDNEAIYDICRRSLNIERPTYTNLNRLVSQVISSLTASLRFDGALNVDVTEFQTNLVPYPRIHFMLSSYAPVISAEKAFHEQLSVAEITNSAFEPASMMAKCDPRHGKYMACCLMYRGDVVPKDVNAAVGTIKTKRTIQFVDWCPTGFKCGINYQPPTVVPGGDLAKVQRAVCMISNSTSVAEVFSRIDHKFDLMYAKRAFVHWYVGEGMEEGEFSEAREDLAALEKDYEEVGAEGGDDEDDEGEEY</sequence>
<feature type="chain" id="PRO_0000048139" description="Tubulin alpha-6 chain">
    <location>
        <begin position="1"/>
        <end position="450"/>
    </location>
</feature>
<feature type="region of interest" description="Disordered" evidence="4">
    <location>
        <begin position="430"/>
        <end position="450"/>
    </location>
</feature>
<feature type="compositionally biased region" description="Acidic residues" evidence="4">
    <location>
        <begin position="431"/>
        <end position="450"/>
    </location>
</feature>
<feature type="active site" evidence="2">
    <location>
        <position position="254"/>
    </location>
</feature>
<feature type="binding site" evidence="2">
    <location>
        <position position="11"/>
    </location>
    <ligand>
        <name>GTP</name>
        <dbReference type="ChEBI" id="CHEBI:37565"/>
    </ligand>
</feature>
<feature type="binding site" evidence="2">
    <location>
        <position position="71"/>
    </location>
    <ligand>
        <name>GTP</name>
        <dbReference type="ChEBI" id="CHEBI:37565"/>
    </ligand>
</feature>
<feature type="binding site" evidence="2">
    <location>
        <position position="71"/>
    </location>
    <ligand>
        <name>Mg(2+)</name>
        <dbReference type="ChEBI" id="CHEBI:18420"/>
    </ligand>
</feature>
<feature type="binding site" evidence="2">
    <location>
        <position position="144"/>
    </location>
    <ligand>
        <name>GTP</name>
        <dbReference type="ChEBI" id="CHEBI:37565"/>
    </ligand>
</feature>
<feature type="binding site" evidence="2">
    <location>
        <position position="145"/>
    </location>
    <ligand>
        <name>GTP</name>
        <dbReference type="ChEBI" id="CHEBI:37565"/>
    </ligand>
</feature>
<feature type="binding site" evidence="2">
    <location>
        <position position="179"/>
    </location>
    <ligand>
        <name>GTP</name>
        <dbReference type="ChEBI" id="CHEBI:37565"/>
    </ligand>
</feature>
<feature type="binding site" evidence="2">
    <location>
        <position position="206"/>
    </location>
    <ligand>
        <name>GTP</name>
        <dbReference type="ChEBI" id="CHEBI:37565"/>
    </ligand>
</feature>
<feature type="binding site" evidence="2">
    <location>
        <position position="228"/>
    </location>
    <ligand>
        <name>GTP</name>
        <dbReference type="ChEBI" id="CHEBI:37565"/>
    </ligand>
</feature>
<feature type="site" description="Involved in polymerization">
    <location>
        <position position="450"/>
    </location>
</feature>
<feature type="modified residue" description="Phosphothreonine" evidence="3">
    <location>
        <position position="349"/>
    </location>
</feature>
<dbReference type="EC" id="3.6.5.-" evidence="2"/>
<dbReference type="EMBL" id="M84699">
    <property type="protein sequence ID" value="AAA32892.1"/>
    <property type="molecule type" value="Genomic_DNA"/>
</dbReference>
<dbReference type="EMBL" id="Z97337">
    <property type="protein sequence ID" value="CAB10275.1"/>
    <property type="molecule type" value="Genomic_DNA"/>
</dbReference>
<dbReference type="EMBL" id="AL161540">
    <property type="protein sequence ID" value="CAB78538.1"/>
    <property type="molecule type" value="Genomic_DNA"/>
</dbReference>
<dbReference type="EMBL" id="CP002687">
    <property type="protein sequence ID" value="AEE83530.1"/>
    <property type="molecule type" value="Genomic_DNA"/>
</dbReference>
<dbReference type="EMBL" id="AY058858">
    <property type="protein sequence ID" value="AAL24246.1"/>
    <property type="molecule type" value="mRNA"/>
</dbReference>
<dbReference type="EMBL" id="AY065347">
    <property type="protein sequence ID" value="AAL38788.1"/>
    <property type="molecule type" value="mRNA"/>
</dbReference>
<dbReference type="EMBL" id="AY079036">
    <property type="protein sequence ID" value="AAL79586.1"/>
    <property type="molecule type" value="mRNA"/>
</dbReference>
<dbReference type="EMBL" id="AY117174">
    <property type="protein sequence ID" value="AAM51249.1"/>
    <property type="molecule type" value="mRNA"/>
</dbReference>
<dbReference type="PIR" id="JQ1597">
    <property type="entry name" value="JQ1597"/>
</dbReference>
<dbReference type="RefSeq" id="NP_193232.1">
    <molecule id="P29511-1"/>
    <property type="nucleotide sequence ID" value="NM_117582.4"/>
</dbReference>
<dbReference type="SMR" id="P29511"/>
<dbReference type="BioGRID" id="12451">
    <property type="interactions" value="6"/>
</dbReference>
<dbReference type="FunCoup" id="P29511">
    <property type="interactions" value="1853"/>
</dbReference>
<dbReference type="IntAct" id="P29511">
    <property type="interactions" value="2"/>
</dbReference>
<dbReference type="STRING" id="3702.P29511"/>
<dbReference type="iPTMnet" id="P29511"/>
<dbReference type="PaxDb" id="3702-AT4G14960.2"/>
<dbReference type="EnsemblPlants" id="AT4G14960.2">
    <molecule id="P29511-1"/>
    <property type="protein sequence ID" value="AT4G14960.2"/>
    <property type="gene ID" value="AT4G14960"/>
</dbReference>
<dbReference type="GeneID" id="827154"/>
<dbReference type="Gramene" id="AT4G14960.2">
    <molecule id="P29511-1"/>
    <property type="protein sequence ID" value="AT4G14960.2"/>
    <property type="gene ID" value="AT4G14960"/>
</dbReference>
<dbReference type="KEGG" id="ath:AT4G14960"/>
<dbReference type="Araport" id="AT4G14960"/>
<dbReference type="TAIR" id="AT4G14960">
    <property type="gene designation" value="TUA6"/>
</dbReference>
<dbReference type="eggNOG" id="KOG1376">
    <property type="taxonomic scope" value="Eukaryota"/>
</dbReference>
<dbReference type="HOGENOM" id="CLU_015718_0_0_1"/>
<dbReference type="InParanoid" id="P29511"/>
<dbReference type="OMA" id="LEADQCK"/>
<dbReference type="OrthoDB" id="1514140at2759"/>
<dbReference type="PhylomeDB" id="P29511"/>
<dbReference type="CD-CODE" id="4299E36E">
    <property type="entry name" value="Nucleolus"/>
</dbReference>
<dbReference type="PRO" id="PR:P29511"/>
<dbReference type="Proteomes" id="UP000006548">
    <property type="component" value="Chromosome 4"/>
</dbReference>
<dbReference type="ExpressionAtlas" id="P29511">
    <property type="expression patterns" value="baseline and differential"/>
</dbReference>
<dbReference type="GO" id="GO:0005829">
    <property type="term" value="C:cytosol"/>
    <property type="evidence" value="ECO:0007005"/>
    <property type="project" value="TAIR"/>
</dbReference>
<dbReference type="GO" id="GO:0005874">
    <property type="term" value="C:microtubule"/>
    <property type="evidence" value="ECO:0000314"/>
    <property type="project" value="TAIR"/>
</dbReference>
<dbReference type="GO" id="GO:0005730">
    <property type="term" value="C:nucleolus"/>
    <property type="evidence" value="ECO:0007005"/>
    <property type="project" value="TAIR"/>
</dbReference>
<dbReference type="GO" id="GO:0009505">
    <property type="term" value="C:plant-type cell wall"/>
    <property type="evidence" value="ECO:0007005"/>
    <property type="project" value="TAIR"/>
</dbReference>
<dbReference type="GO" id="GO:0005886">
    <property type="term" value="C:plasma membrane"/>
    <property type="evidence" value="ECO:0007005"/>
    <property type="project" value="TAIR"/>
</dbReference>
<dbReference type="GO" id="GO:0009506">
    <property type="term" value="C:plasmodesma"/>
    <property type="evidence" value="ECO:0007005"/>
    <property type="project" value="TAIR"/>
</dbReference>
<dbReference type="GO" id="GO:0045298">
    <property type="term" value="C:tubulin complex"/>
    <property type="evidence" value="ECO:0000314"/>
    <property type="project" value="TAIR"/>
</dbReference>
<dbReference type="GO" id="GO:0005773">
    <property type="term" value="C:vacuole"/>
    <property type="evidence" value="ECO:0007005"/>
    <property type="project" value="TAIR"/>
</dbReference>
<dbReference type="GO" id="GO:0005525">
    <property type="term" value="F:GTP binding"/>
    <property type="evidence" value="ECO:0007669"/>
    <property type="project" value="UniProtKB-KW"/>
</dbReference>
<dbReference type="GO" id="GO:0016787">
    <property type="term" value="F:hydrolase activity"/>
    <property type="evidence" value="ECO:0007669"/>
    <property type="project" value="UniProtKB-KW"/>
</dbReference>
<dbReference type="GO" id="GO:0046872">
    <property type="term" value="F:metal ion binding"/>
    <property type="evidence" value="ECO:0007669"/>
    <property type="project" value="UniProtKB-KW"/>
</dbReference>
<dbReference type="GO" id="GO:0005200">
    <property type="term" value="F:structural constituent of cytoskeleton"/>
    <property type="evidence" value="ECO:0000250"/>
    <property type="project" value="TAIR"/>
</dbReference>
<dbReference type="GO" id="GO:0071258">
    <property type="term" value="P:cellular response to gravity"/>
    <property type="evidence" value="ECO:0000315"/>
    <property type="project" value="TAIR"/>
</dbReference>
<dbReference type="GO" id="GO:0000226">
    <property type="term" value="P:microtubule cytoskeleton organization"/>
    <property type="evidence" value="ECO:0000315"/>
    <property type="project" value="TAIR"/>
</dbReference>
<dbReference type="CDD" id="cd02186">
    <property type="entry name" value="alpha_tubulin"/>
    <property type="match status" value="1"/>
</dbReference>
<dbReference type="FunFam" id="1.10.287.600:FF:000005">
    <property type="entry name" value="Tubulin alpha chain"/>
    <property type="match status" value="1"/>
</dbReference>
<dbReference type="FunFam" id="3.30.1330.20:FF:000001">
    <property type="entry name" value="Tubulin alpha chain"/>
    <property type="match status" value="1"/>
</dbReference>
<dbReference type="FunFam" id="3.40.50.1440:FF:000004">
    <property type="entry name" value="Tubulin alpha chain"/>
    <property type="match status" value="1"/>
</dbReference>
<dbReference type="Gene3D" id="1.10.287.600">
    <property type="entry name" value="Helix hairpin bin"/>
    <property type="match status" value="1"/>
</dbReference>
<dbReference type="Gene3D" id="3.30.1330.20">
    <property type="entry name" value="Tubulin/FtsZ, C-terminal domain"/>
    <property type="match status" value="1"/>
</dbReference>
<dbReference type="Gene3D" id="3.40.50.1440">
    <property type="entry name" value="Tubulin/FtsZ, GTPase domain"/>
    <property type="match status" value="1"/>
</dbReference>
<dbReference type="InterPro" id="IPR002452">
    <property type="entry name" value="Alpha_tubulin"/>
</dbReference>
<dbReference type="InterPro" id="IPR008280">
    <property type="entry name" value="Tub_FtsZ_C"/>
</dbReference>
<dbReference type="InterPro" id="IPR000217">
    <property type="entry name" value="Tubulin"/>
</dbReference>
<dbReference type="InterPro" id="IPR037103">
    <property type="entry name" value="Tubulin/FtsZ-like_C"/>
</dbReference>
<dbReference type="InterPro" id="IPR018316">
    <property type="entry name" value="Tubulin/FtsZ_2-layer-sand-dom"/>
</dbReference>
<dbReference type="InterPro" id="IPR036525">
    <property type="entry name" value="Tubulin/FtsZ_GTPase_sf"/>
</dbReference>
<dbReference type="InterPro" id="IPR023123">
    <property type="entry name" value="Tubulin_C"/>
</dbReference>
<dbReference type="InterPro" id="IPR017975">
    <property type="entry name" value="Tubulin_CS"/>
</dbReference>
<dbReference type="InterPro" id="IPR003008">
    <property type="entry name" value="Tubulin_FtsZ_GTPase"/>
</dbReference>
<dbReference type="PANTHER" id="PTHR11588">
    <property type="entry name" value="TUBULIN"/>
    <property type="match status" value="1"/>
</dbReference>
<dbReference type="Pfam" id="PF00091">
    <property type="entry name" value="Tubulin"/>
    <property type="match status" value="1"/>
</dbReference>
<dbReference type="Pfam" id="PF03953">
    <property type="entry name" value="Tubulin_C"/>
    <property type="match status" value="1"/>
</dbReference>
<dbReference type="PRINTS" id="PR01162">
    <property type="entry name" value="ALPHATUBULIN"/>
</dbReference>
<dbReference type="PRINTS" id="PR01161">
    <property type="entry name" value="TUBULIN"/>
</dbReference>
<dbReference type="SMART" id="SM00864">
    <property type="entry name" value="Tubulin"/>
    <property type="match status" value="1"/>
</dbReference>
<dbReference type="SMART" id="SM00865">
    <property type="entry name" value="Tubulin_C"/>
    <property type="match status" value="1"/>
</dbReference>
<dbReference type="SUPFAM" id="SSF55307">
    <property type="entry name" value="Tubulin C-terminal domain-like"/>
    <property type="match status" value="1"/>
</dbReference>
<dbReference type="SUPFAM" id="SSF52490">
    <property type="entry name" value="Tubulin nucleotide-binding domain-like"/>
    <property type="match status" value="1"/>
</dbReference>
<dbReference type="PROSITE" id="PS00227">
    <property type="entry name" value="TUBULIN"/>
    <property type="match status" value="1"/>
</dbReference>
<comment type="function">
    <text>Tubulin is the major constituent of microtubules, a cylinder consisting of laterally associated linear protofilaments composed of alpha- and beta-tubulin heterodimers. Microtubules grow by the addition of GTP-tubulin dimers to the microtubule end, where a stabilizing cap forms. Below the cap, tubulin dimers are in GDP-bound state, owing to GTPase activity of alpha-tubulin.</text>
</comment>
<comment type="catalytic activity">
    <reaction evidence="2">
        <text>GTP + H2O = GDP + phosphate + H(+)</text>
        <dbReference type="Rhea" id="RHEA:19669"/>
        <dbReference type="ChEBI" id="CHEBI:15377"/>
        <dbReference type="ChEBI" id="CHEBI:15378"/>
        <dbReference type="ChEBI" id="CHEBI:37565"/>
        <dbReference type="ChEBI" id="CHEBI:43474"/>
        <dbReference type="ChEBI" id="CHEBI:58189"/>
    </reaction>
    <physiologicalReaction direction="left-to-right" evidence="2">
        <dbReference type="Rhea" id="RHEA:19670"/>
    </physiologicalReaction>
</comment>
<comment type="cofactor">
    <cofactor evidence="2">
        <name>Mg(2+)</name>
        <dbReference type="ChEBI" id="CHEBI:18420"/>
    </cofactor>
</comment>
<comment type="subunit">
    <text evidence="5">Dimer of alpha and beta chains. A typical microtubule is a hollow water-filled tube with an outer diameter of 25 nm and an inner diameter of 15 nM. Alpha-beta heterodimers associate head-to-tail to form protofilaments running lengthwise along the microtubule wall with the beta-tubulin subunit facing the microtubule plus end conferring a structural polarity. Microtubules usually have 13 protofilaments but different protofilament numbers can be found in some organisms and specialized cells. Interacts with TFCB.</text>
</comment>
<comment type="subcellular location">
    <subcellularLocation>
        <location>Cytoplasm</location>
        <location>Cytoskeleton</location>
    </subcellularLocation>
</comment>
<comment type="alternative products">
    <event type="alternative splicing"/>
    <isoform>
        <id>P29511-1</id>
        <name>1</name>
        <sequence type="displayed"/>
    </isoform>
    <text>A number of isoforms are produced. According to EST sequences.</text>
</comment>
<comment type="PTM">
    <text evidence="1">Undergoes a tyrosination/detyrosination cycle, the cyclic removal and re-addition of a C-terminal tyrosine residue by the enzymes tubulin tyrosine carboxypeptidase (TTCP) and tubulin tyrosine ligase (TTL), respectively.</text>
</comment>
<comment type="PTM">
    <text evidence="1">Acetylation of alpha chains at Lys-40 stabilizes microtubules and affects affinity and processivity of microtubule motors. This modification has a role in multiple cellular functions, ranging from cell motility, cell cycle progression or cell differentiation to intracellular trafficking and signaling (By similarity).</text>
</comment>
<comment type="miscellaneous">
    <text>There are six genes coding for alpha-tubulin.</text>
</comment>
<comment type="similarity">
    <text evidence="6">Belongs to the tubulin family.</text>
</comment>
<gene>
    <name type="primary">TUBA6</name>
    <name type="synonym">TUA6</name>
    <name type="ordered locus">At4g14960</name>
    <name type="ORF">dl3520c</name>
</gene>
<name>TBA6_ARATH</name>
<evidence type="ECO:0000250" key="1"/>
<evidence type="ECO:0000250" key="2">
    <source>
        <dbReference type="UniProtKB" id="P68363"/>
    </source>
</evidence>
<evidence type="ECO:0000250" key="3">
    <source>
        <dbReference type="UniProtKB" id="Q56WH1"/>
    </source>
</evidence>
<evidence type="ECO:0000256" key="4">
    <source>
        <dbReference type="SAM" id="MobiDB-lite"/>
    </source>
</evidence>
<evidence type="ECO:0000269" key="5">
    <source>
    </source>
</evidence>
<evidence type="ECO:0000305" key="6"/>
<protein>
    <recommendedName>
        <fullName>Tubulin alpha-6 chain</fullName>
        <ecNumber evidence="2">3.6.5.-</ecNumber>
    </recommendedName>
</protein>
<accession>P29511</accession>